<feature type="chain" id="PRO_1000079157" description="Enolase">
    <location>
        <begin position="1"/>
        <end position="434"/>
    </location>
</feature>
<feature type="active site" description="Proton donor" evidence="1">
    <location>
        <position position="207"/>
    </location>
</feature>
<feature type="active site" description="Proton acceptor" evidence="1">
    <location>
        <position position="343"/>
    </location>
</feature>
<feature type="binding site" evidence="1">
    <location>
        <position position="165"/>
    </location>
    <ligand>
        <name>(2R)-2-phosphoglycerate</name>
        <dbReference type="ChEBI" id="CHEBI:58289"/>
    </ligand>
</feature>
<feature type="binding site" evidence="1">
    <location>
        <position position="244"/>
    </location>
    <ligand>
        <name>Mg(2+)</name>
        <dbReference type="ChEBI" id="CHEBI:18420"/>
    </ligand>
</feature>
<feature type="binding site" evidence="1">
    <location>
        <position position="291"/>
    </location>
    <ligand>
        <name>Mg(2+)</name>
        <dbReference type="ChEBI" id="CHEBI:18420"/>
    </ligand>
</feature>
<feature type="binding site" evidence="1">
    <location>
        <position position="318"/>
    </location>
    <ligand>
        <name>Mg(2+)</name>
        <dbReference type="ChEBI" id="CHEBI:18420"/>
    </ligand>
</feature>
<feature type="binding site" evidence="1">
    <location>
        <position position="343"/>
    </location>
    <ligand>
        <name>(2R)-2-phosphoglycerate</name>
        <dbReference type="ChEBI" id="CHEBI:58289"/>
    </ligand>
</feature>
<feature type="binding site" evidence="1">
    <location>
        <position position="372"/>
    </location>
    <ligand>
        <name>(2R)-2-phosphoglycerate</name>
        <dbReference type="ChEBI" id="CHEBI:58289"/>
    </ligand>
</feature>
<feature type="binding site" evidence="1">
    <location>
        <position position="373"/>
    </location>
    <ligand>
        <name>(2R)-2-phosphoglycerate</name>
        <dbReference type="ChEBI" id="CHEBI:58289"/>
    </ligand>
</feature>
<feature type="binding site" evidence="1">
    <location>
        <position position="394"/>
    </location>
    <ligand>
        <name>(2R)-2-phosphoglycerate</name>
        <dbReference type="ChEBI" id="CHEBI:58289"/>
    </ligand>
</feature>
<keyword id="KW-0963">Cytoplasm</keyword>
<keyword id="KW-0324">Glycolysis</keyword>
<keyword id="KW-0456">Lyase</keyword>
<keyword id="KW-0460">Magnesium</keyword>
<keyword id="KW-0479">Metal-binding</keyword>
<keyword id="KW-0964">Secreted</keyword>
<organism>
    <name type="scientific">Staphylococcus aureus (strain USA300 / TCH1516)</name>
    <dbReference type="NCBI Taxonomy" id="451516"/>
    <lineage>
        <taxon>Bacteria</taxon>
        <taxon>Bacillati</taxon>
        <taxon>Bacillota</taxon>
        <taxon>Bacilli</taxon>
        <taxon>Bacillales</taxon>
        <taxon>Staphylococcaceae</taxon>
        <taxon>Staphylococcus</taxon>
    </lineage>
</organism>
<gene>
    <name evidence="1" type="primary">eno</name>
    <name type="ordered locus">USA300HOU_0806</name>
</gene>
<accession>A8Z1A4</accession>
<sequence length="434" mass="47117">MPIITDVYAREVLDSRGNPTVEVEVLTESGAFGRALVPSGASTGEHEAVELRDGDKSRYLGKGVTKAVENVNEIIAPEIIEGEFSVLDQVSIDKMMIALDGTPNKGKLGANAILGVSIAVARAAADLLGQPLYKYLGGFNGKQLPVPMMNIVNGGSHSDAPIAFQEFMILPVGATTFKESLRWGTEIFHNLKSILSKRGLETAVGDEGGFAPKFEGTEDAVETIIQAIEAAGYKPGEEVFLGFDCASSEFYENGVYDYSKFEGEHGAKRTAAEQVDYLEQLVDKYPIITIEDGMDENDWDGWKQLTERIGDRVQLVGDDLFVTNTEILAKGIENGIGNSILIKVNQIGTLTETFDAIEMAQKAGYTAVVSHRSGETEDTTIADIAVATNAGQIKTGSLSRTDRIAKYNQLLRIEDELFETAKYDGIKSFYNLDK</sequence>
<name>ENO_STAAT</name>
<evidence type="ECO:0000255" key="1">
    <source>
        <dbReference type="HAMAP-Rule" id="MF_00318"/>
    </source>
</evidence>
<protein>
    <recommendedName>
        <fullName evidence="1">Enolase</fullName>
        <ecNumber evidence="1">4.2.1.11</ecNumber>
    </recommendedName>
    <alternativeName>
        <fullName evidence="1">2-phospho-D-glycerate hydro-lyase</fullName>
    </alternativeName>
    <alternativeName>
        <fullName evidence="1">2-phosphoglycerate dehydratase</fullName>
    </alternativeName>
</protein>
<reference key="1">
    <citation type="journal article" date="2007" name="BMC Microbiol.">
        <title>Subtle genetic changes enhance virulence of methicillin resistant and sensitive Staphylococcus aureus.</title>
        <authorList>
            <person name="Highlander S.K."/>
            <person name="Hulten K.G."/>
            <person name="Qin X."/>
            <person name="Jiang H."/>
            <person name="Yerrapragada S."/>
            <person name="Mason E.O. Jr."/>
            <person name="Shang Y."/>
            <person name="Williams T.M."/>
            <person name="Fortunov R.M."/>
            <person name="Liu Y."/>
            <person name="Igboeli O."/>
            <person name="Petrosino J."/>
            <person name="Tirumalai M."/>
            <person name="Uzman A."/>
            <person name="Fox G.E."/>
            <person name="Cardenas A.M."/>
            <person name="Muzny D.M."/>
            <person name="Hemphill L."/>
            <person name="Ding Y."/>
            <person name="Dugan S."/>
            <person name="Blyth P.R."/>
            <person name="Buhay C.J."/>
            <person name="Dinh H.H."/>
            <person name="Hawes A.C."/>
            <person name="Holder M."/>
            <person name="Kovar C.L."/>
            <person name="Lee S.L."/>
            <person name="Liu W."/>
            <person name="Nazareth L.V."/>
            <person name="Wang Q."/>
            <person name="Zhou J."/>
            <person name="Kaplan S.L."/>
            <person name="Weinstock G.M."/>
        </authorList>
    </citation>
    <scope>NUCLEOTIDE SEQUENCE [LARGE SCALE GENOMIC DNA]</scope>
    <source>
        <strain>USA300 / TCH1516</strain>
    </source>
</reference>
<dbReference type="EC" id="4.2.1.11" evidence="1"/>
<dbReference type="EMBL" id="CP000730">
    <property type="protein sequence ID" value="ABX28827.1"/>
    <property type="molecule type" value="Genomic_DNA"/>
</dbReference>
<dbReference type="RefSeq" id="WP_001121760.1">
    <property type="nucleotide sequence ID" value="NC_010079.1"/>
</dbReference>
<dbReference type="SMR" id="A8Z1A4"/>
<dbReference type="KEGG" id="sax:USA300HOU_0806"/>
<dbReference type="HOGENOM" id="CLU_031223_2_1_9"/>
<dbReference type="UniPathway" id="UPA00109">
    <property type="reaction ID" value="UER00187"/>
</dbReference>
<dbReference type="GO" id="GO:0009986">
    <property type="term" value="C:cell surface"/>
    <property type="evidence" value="ECO:0007669"/>
    <property type="project" value="UniProtKB-SubCell"/>
</dbReference>
<dbReference type="GO" id="GO:0005576">
    <property type="term" value="C:extracellular region"/>
    <property type="evidence" value="ECO:0007669"/>
    <property type="project" value="UniProtKB-SubCell"/>
</dbReference>
<dbReference type="GO" id="GO:0000015">
    <property type="term" value="C:phosphopyruvate hydratase complex"/>
    <property type="evidence" value="ECO:0007669"/>
    <property type="project" value="InterPro"/>
</dbReference>
<dbReference type="GO" id="GO:0000287">
    <property type="term" value="F:magnesium ion binding"/>
    <property type="evidence" value="ECO:0007669"/>
    <property type="project" value="UniProtKB-UniRule"/>
</dbReference>
<dbReference type="GO" id="GO:0004634">
    <property type="term" value="F:phosphopyruvate hydratase activity"/>
    <property type="evidence" value="ECO:0007669"/>
    <property type="project" value="UniProtKB-UniRule"/>
</dbReference>
<dbReference type="GO" id="GO:0006096">
    <property type="term" value="P:glycolytic process"/>
    <property type="evidence" value="ECO:0007669"/>
    <property type="project" value="UniProtKB-UniRule"/>
</dbReference>
<dbReference type="CDD" id="cd03313">
    <property type="entry name" value="enolase"/>
    <property type="match status" value="1"/>
</dbReference>
<dbReference type="FunFam" id="3.20.20.120:FF:000001">
    <property type="entry name" value="Enolase"/>
    <property type="match status" value="1"/>
</dbReference>
<dbReference type="FunFam" id="3.30.390.10:FF:000001">
    <property type="entry name" value="Enolase"/>
    <property type="match status" value="1"/>
</dbReference>
<dbReference type="Gene3D" id="3.20.20.120">
    <property type="entry name" value="Enolase-like C-terminal domain"/>
    <property type="match status" value="1"/>
</dbReference>
<dbReference type="Gene3D" id="3.30.390.10">
    <property type="entry name" value="Enolase-like, N-terminal domain"/>
    <property type="match status" value="1"/>
</dbReference>
<dbReference type="HAMAP" id="MF_00318">
    <property type="entry name" value="Enolase"/>
    <property type="match status" value="1"/>
</dbReference>
<dbReference type="InterPro" id="IPR000941">
    <property type="entry name" value="Enolase"/>
</dbReference>
<dbReference type="InterPro" id="IPR036849">
    <property type="entry name" value="Enolase-like_C_sf"/>
</dbReference>
<dbReference type="InterPro" id="IPR029017">
    <property type="entry name" value="Enolase-like_N"/>
</dbReference>
<dbReference type="InterPro" id="IPR020810">
    <property type="entry name" value="Enolase_C"/>
</dbReference>
<dbReference type="InterPro" id="IPR020809">
    <property type="entry name" value="Enolase_CS"/>
</dbReference>
<dbReference type="InterPro" id="IPR020811">
    <property type="entry name" value="Enolase_N"/>
</dbReference>
<dbReference type="NCBIfam" id="TIGR01060">
    <property type="entry name" value="eno"/>
    <property type="match status" value="1"/>
</dbReference>
<dbReference type="PANTHER" id="PTHR11902">
    <property type="entry name" value="ENOLASE"/>
    <property type="match status" value="1"/>
</dbReference>
<dbReference type="PANTHER" id="PTHR11902:SF1">
    <property type="entry name" value="ENOLASE"/>
    <property type="match status" value="1"/>
</dbReference>
<dbReference type="Pfam" id="PF00113">
    <property type="entry name" value="Enolase_C"/>
    <property type="match status" value="1"/>
</dbReference>
<dbReference type="Pfam" id="PF03952">
    <property type="entry name" value="Enolase_N"/>
    <property type="match status" value="1"/>
</dbReference>
<dbReference type="PIRSF" id="PIRSF001400">
    <property type="entry name" value="Enolase"/>
    <property type="match status" value="1"/>
</dbReference>
<dbReference type="PRINTS" id="PR00148">
    <property type="entry name" value="ENOLASE"/>
</dbReference>
<dbReference type="SFLD" id="SFLDF00002">
    <property type="entry name" value="enolase"/>
    <property type="match status" value="1"/>
</dbReference>
<dbReference type="SFLD" id="SFLDG00178">
    <property type="entry name" value="enolase"/>
    <property type="match status" value="1"/>
</dbReference>
<dbReference type="SMART" id="SM01192">
    <property type="entry name" value="Enolase_C"/>
    <property type="match status" value="1"/>
</dbReference>
<dbReference type="SMART" id="SM01193">
    <property type="entry name" value="Enolase_N"/>
    <property type="match status" value="1"/>
</dbReference>
<dbReference type="SUPFAM" id="SSF51604">
    <property type="entry name" value="Enolase C-terminal domain-like"/>
    <property type="match status" value="1"/>
</dbReference>
<dbReference type="SUPFAM" id="SSF54826">
    <property type="entry name" value="Enolase N-terminal domain-like"/>
    <property type="match status" value="1"/>
</dbReference>
<dbReference type="PROSITE" id="PS00164">
    <property type="entry name" value="ENOLASE"/>
    <property type="match status" value="1"/>
</dbReference>
<proteinExistence type="inferred from homology"/>
<comment type="function">
    <text evidence="1">Catalyzes the reversible conversion of 2-phosphoglycerate (2-PG) into phosphoenolpyruvate (PEP). It is essential for the degradation of carbohydrates via glycolysis.</text>
</comment>
<comment type="catalytic activity">
    <reaction evidence="1">
        <text>(2R)-2-phosphoglycerate = phosphoenolpyruvate + H2O</text>
        <dbReference type="Rhea" id="RHEA:10164"/>
        <dbReference type="ChEBI" id="CHEBI:15377"/>
        <dbReference type="ChEBI" id="CHEBI:58289"/>
        <dbReference type="ChEBI" id="CHEBI:58702"/>
        <dbReference type="EC" id="4.2.1.11"/>
    </reaction>
</comment>
<comment type="cofactor">
    <cofactor evidence="1">
        <name>Mg(2+)</name>
        <dbReference type="ChEBI" id="CHEBI:18420"/>
    </cofactor>
    <text evidence="1">Binds a second Mg(2+) ion via substrate during catalysis.</text>
</comment>
<comment type="pathway">
    <text evidence="1">Carbohydrate degradation; glycolysis; pyruvate from D-glyceraldehyde 3-phosphate: step 4/5.</text>
</comment>
<comment type="subcellular location">
    <subcellularLocation>
        <location evidence="1">Cytoplasm</location>
    </subcellularLocation>
    <subcellularLocation>
        <location evidence="1">Secreted</location>
    </subcellularLocation>
    <subcellularLocation>
        <location evidence="1">Cell surface</location>
    </subcellularLocation>
    <text evidence="1">Fractions of enolase are present in both the cytoplasm and on the cell surface.</text>
</comment>
<comment type="similarity">
    <text evidence="1">Belongs to the enolase family.</text>
</comment>